<feature type="chain" id="PRO_0000201384" description="Probable Ni/Fe-hydrogenase 1 B-type cytochrome subunit">
    <location>
        <begin position="1"/>
        <end position="235"/>
    </location>
</feature>
<feature type="topological domain" description="Cytoplasmic" evidence="1">
    <location>
        <begin position="1"/>
        <end position="19"/>
    </location>
</feature>
<feature type="transmembrane region" description="Helical" evidence="1">
    <location>
        <begin position="20"/>
        <end position="40"/>
    </location>
</feature>
<feature type="topological domain" description="Periplasmic" evidence="1">
    <location>
        <begin position="41"/>
        <end position="63"/>
    </location>
</feature>
<feature type="transmembrane region" description="Helical" evidence="1">
    <location>
        <begin position="64"/>
        <end position="84"/>
    </location>
</feature>
<feature type="topological domain" description="Cytoplasmic" evidence="1">
    <location>
        <begin position="85"/>
        <end position="130"/>
    </location>
</feature>
<feature type="transmembrane region" description="Helical" evidence="1">
    <location>
        <begin position="131"/>
        <end position="151"/>
    </location>
</feature>
<feature type="topological domain" description="Periplasmic" evidence="1">
    <location>
        <begin position="152"/>
        <end position="185"/>
    </location>
</feature>
<feature type="transmembrane region" description="Helical" evidence="1">
    <location>
        <begin position="186"/>
        <end position="203"/>
    </location>
</feature>
<feature type="topological domain" description="Cytoplasmic" evidence="1">
    <location>
        <begin position="204"/>
        <end position="235"/>
    </location>
</feature>
<feature type="helix" evidence="4">
    <location>
        <begin position="20"/>
        <end position="40"/>
    </location>
</feature>
<feature type="helix" evidence="3">
    <location>
        <begin position="50"/>
        <end position="52"/>
    </location>
</feature>
<feature type="helix" evidence="4">
    <location>
        <begin position="55"/>
        <end position="83"/>
    </location>
</feature>
<feature type="helix" evidence="4">
    <location>
        <begin position="102"/>
        <end position="111"/>
    </location>
</feature>
<feature type="helix" evidence="4">
    <location>
        <begin position="130"/>
        <end position="151"/>
    </location>
</feature>
<feature type="turn" evidence="4">
    <location>
        <begin position="152"/>
        <end position="155"/>
    </location>
</feature>
<feature type="helix" evidence="4">
    <location>
        <begin position="161"/>
        <end position="165"/>
    </location>
</feature>
<feature type="helix" evidence="4">
    <location>
        <begin position="166"/>
        <end position="172"/>
    </location>
</feature>
<feature type="helix" evidence="4">
    <location>
        <begin position="177"/>
        <end position="203"/>
    </location>
</feature>
<accession>P0AAM1</accession>
<accession>P19929</accession>
<reference key="1">
    <citation type="journal article" date="1990" name="J. Bacteriol.">
        <title>Cloning and sequencing of a putative Escherichia coli [NiFe] hydrogenase-1 operon containing six open reading frames.</title>
        <authorList>
            <person name="Menon N.K."/>
            <person name="Robbins J."/>
            <person name="Peck H.D. Jr."/>
            <person name="Chatelus C.Y."/>
            <person name="Choi E.-S."/>
            <person name="Przybyla A.E."/>
        </authorList>
    </citation>
    <scope>NUCLEOTIDE SEQUENCE [GENOMIC DNA]</scope>
</reference>
<reference key="2">
    <citation type="journal article" date="1996" name="DNA Res.">
        <title>A 718-kb DNA sequence of the Escherichia coli K-12 genome corresponding to the 12.7-28.0 min region on the linkage map.</title>
        <authorList>
            <person name="Oshima T."/>
            <person name="Aiba H."/>
            <person name="Baba T."/>
            <person name="Fujita K."/>
            <person name="Hayashi K."/>
            <person name="Honjo A."/>
            <person name="Ikemoto K."/>
            <person name="Inada T."/>
            <person name="Itoh T."/>
            <person name="Kajihara M."/>
            <person name="Kanai K."/>
            <person name="Kashimoto K."/>
            <person name="Kimura S."/>
            <person name="Kitagawa M."/>
            <person name="Makino K."/>
            <person name="Masuda S."/>
            <person name="Miki T."/>
            <person name="Mizobuchi K."/>
            <person name="Mori H."/>
            <person name="Motomura K."/>
            <person name="Nakamura Y."/>
            <person name="Nashimoto H."/>
            <person name="Nishio Y."/>
            <person name="Saito N."/>
            <person name="Sampei G."/>
            <person name="Seki Y."/>
            <person name="Tagami H."/>
            <person name="Takemoto K."/>
            <person name="Wada C."/>
            <person name="Yamamoto Y."/>
            <person name="Yano M."/>
            <person name="Horiuchi T."/>
        </authorList>
    </citation>
    <scope>NUCLEOTIDE SEQUENCE [LARGE SCALE GENOMIC DNA]</scope>
    <source>
        <strain>K12 / W3110 / ATCC 27325 / DSM 5911</strain>
    </source>
</reference>
<reference key="3">
    <citation type="journal article" date="1997" name="Science">
        <title>The complete genome sequence of Escherichia coli K-12.</title>
        <authorList>
            <person name="Blattner F.R."/>
            <person name="Plunkett G. III"/>
            <person name="Bloch C.A."/>
            <person name="Perna N.T."/>
            <person name="Burland V."/>
            <person name="Riley M."/>
            <person name="Collado-Vides J."/>
            <person name="Glasner J.D."/>
            <person name="Rode C.K."/>
            <person name="Mayhew G.F."/>
            <person name="Gregor J."/>
            <person name="Davis N.W."/>
            <person name="Kirkpatrick H.A."/>
            <person name="Goeden M.A."/>
            <person name="Rose D.J."/>
            <person name="Mau B."/>
            <person name="Shao Y."/>
        </authorList>
    </citation>
    <scope>NUCLEOTIDE SEQUENCE [LARGE SCALE GENOMIC DNA]</scope>
    <source>
        <strain>K12 / MG1655 / ATCC 47076</strain>
    </source>
</reference>
<reference key="4">
    <citation type="journal article" date="2006" name="Mol. Syst. Biol.">
        <title>Highly accurate genome sequences of Escherichia coli K-12 strains MG1655 and W3110.</title>
        <authorList>
            <person name="Hayashi K."/>
            <person name="Morooka N."/>
            <person name="Yamamoto Y."/>
            <person name="Fujita K."/>
            <person name="Isono K."/>
            <person name="Choi S."/>
            <person name="Ohtsubo E."/>
            <person name="Baba T."/>
            <person name="Wanner B.L."/>
            <person name="Mori H."/>
            <person name="Horiuchi T."/>
        </authorList>
    </citation>
    <scope>NUCLEOTIDE SEQUENCE [LARGE SCALE GENOMIC DNA]</scope>
    <source>
        <strain>K12 / W3110 / ATCC 27325 / DSM 5911</strain>
    </source>
</reference>
<reference key="5">
    <citation type="journal article" date="2005" name="Science">
        <title>Global topology analysis of the Escherichia coli inner membrane proteome.</title>
        <authorList>
            <person name="Daley D.O."/>
            <person name="Rapp M."/>
            <person name="Granseth E."/>
            <person name="Melen K."/>
            <person name="Drew D."/>
            <person name="von Heijne G."/>
        </authorList>
    </citation>
    <scope>TOPOLOGY [LARGE SCALE ANALYSIS]</scope>
    <source>
        <strain>K12 / MG1655 / ATCC 47076</strain>
    </source>
</reference>
<evidence type="ECO:0000255" key="1"/>
<evidence type="ECO:0000305" key="2"/>
<evidence type="ECO:0007829" key="3">
    <source>
        <dbReference type="PDB" id="4GD3"/>
    </source>
</evidence>
<evidence type="ECO:0007829" key="4">
    <source>
        <dbReference type="PDB" id="6G94"/>
    </source>
</evidence>
<dbReference type="EMBL" id="M34825">
    <property type="protein sequence ID" value="AAA23999.1"/>
    <property type="molecule type" value="Genomic_DNA"/>
</dbReference>
<dbReference type="EMBL" id="U00096">
    <property type="protein sequence ID" value="AAC74059.1"/>
    <property type="molecule type" value="Genomic_DNA"/>
</dbReference>
<dbReference type="EMBL" id="AP009048">
    <property type="protein sequence ID" value="BAA35739.1"/>
    <property type="molecule type" value="Genomic_DNA"/>
</dbReference>
<dbReference type="PIR" id="JV0074">
    <property type="entry name" value="BVECYC"/>
</dbReference>
<dbReference type="RefSeq" id="NP_415493.1">
    <property type="nucleotide sequence ID" value="NC_000913.3"/>
</dbReference>
<dbReference type="RefSeq" id="WP_001186424.1">
    <property type="nucleotide sequence ID" value="NZ_STEB01000006.1"/>
</dbReference>
<dbReference type="PDB" id="4GD3">
    <property type="method" value="X-ray"/>
    <property type="resolution" value="3.30 A"/>
    <property type="chains" value="A/B=1-235"/>
</dbReference>
<dbReference type="PDB" id="6G94">
    <property type="method" value="X-ray"/>
    <property type="resolution" value="2.50 A"/>
    <property type="chains" value="A/B=1-235"/>
</dbReference>
<dbReference type="PDBsum" id="4GD3"/>
<dbReference type="PDBsum" id="6G94"/>
<dbReference type="SMR" id="P0AAM1"/>
<dbReference type="BioGRID" id="4260044">
    <property type="interactions" value="43"/>
</dbReference>
<dbReference type="ComplexPortal" id="CPX-281">
    <property type="entry name" value="Hydrogenase-1 complex"/>
</dbReference>
<dbReference type="DIP" id="DIP-35859N"/>
<dbReference type="FunCoup" id="P0AAM1">
    <property type="interactions" value="441"/>
</dbReference>
<dbReference type="IntAct" id="P0AAM1">
    <property type="interactions" value="3"/>
</dbReference>
<dbReference type="STRING" id="511145.b0974"/>
<dbReference type="jPOST" id="P0AAM1"/>
<dbReference type="PaxDb" id="511145-b0974"/>
<dbReference type="EnsemblBacteria" id="AAC74059">
    <property type="protein sequence ID" value="AAC74059"/>
    <property type="gene ID" value="b0974"/>
</dbReference>
<dbReference type="GeneID" id="75171048"/>
<dbReference type="GeneID" id="945581"/>
<dbReference type="KEGG" id="ecj:JW0956"/>
<dbReference type="KEGG" id="eco:b0974"/>
<dbReference type="KEGG" id="ecoc:C3026_05945"/>
<dbReference type="PATRIC" id="fig|1411691.4.peg.1300"/>
<dbReference type="EchoBASE" id="EB0465"/>
<dbReference type="eggNOG" id="COG1969">
    <property type="taxonomic scope" value="Bacteria"/>
</dbReference>
<dbReference type="HOGENOM" id="CLU_075520_0_0_6"/>
<dbReference type="InParanoid" id="P0AAM1"/>
<dbReference type="OMA" id="IEEIYVW"/>
<dbReference type="OrthoDB" id="197262at2"/>
<dbReference type="PhylomeDB" id="P0AAM1"/>
<dbReference type="BioCyc" id="EcoCyc:HYAC-MONOMER"/>
<dbReference type="BioCyc" id="MetaCyc:HYAC-MONOMER"/>
<dbReference type="EvolutionaryTrace" id="P0AAM1"/>
<dbReference type="PRO" id="PR:P0AAM1"/>
<dbReference type="Proteomes" id="UP000000625">
    <property type="component" value="Chromosome"/>
</dbReference>
<dbReference type="GO" id="GO:0044569">
    <property type="term" value="C:[Ni-Fe] hydrogenase complex"/>
    <property type="evidence" value="ECO:0000314"/>
    <property type="project" value="EcoCyc"/>
</dbReference>
<dbReference type="GO" id="GO:0098567">
    <property type="term" value="C:periplasmic side of plasma membrane"/>
    <property type="evidence" value="ECO:0000314"/>
    <property type="project" value="ComplexPortal"/>
</dbReference>
<dbReference type="GO" id="GO:0005886">
    <property type="term" value="C:plasma membrane"/>
    <property type="evidence" value="ECO:0000314"/>
    <property type="project" value="EcoCyc"/>
</dbReference>
<dbReference type="GO" id="GO:0009055">
    <property type="term" value="F:electron transfer activity"/>
    <property type="evidence" value="ECO:0007669"/>
    <property type="project" value="InterPro"/>
</dbReference>
<dbReference type="GO" id="GO:0020037">
    <property type="term" value="F:heme binding"/>
    <property type="evidence" value="ECO:0000314"/>
    <property type="project" value="EcoCyc"/>
</dbReference>
<dbReference type="GO" id="GO:0033748">
    <property type="term" value="F:hydrogenase (acceptor) activity"/>
    <property type="evidence" value="ECO:0000305"/>
    <property type="project" value="EcoCyc"/>
</dbReference>
<dbReference type="GO" id="GO:0005506">
    <property type="term" value="F:iron ion binding"/>
    <property type="evidence" value="ECO:0007669"/>
    <property type="project" value="InterPro"/>
</dbReference>
<dbReference type="GO" id="GO:0019645">
    <property type="term" value="P:anaerobic electron transport chain"/>
    <property type="evidence" value="ECO:0000314"/>
    <property type="project" value="ComplexPortal"/>
</dbReference>
<dbReference type="GO" id="GO:0009061">
    <property type="term" value="P:anaerobic respiration"/>
    <property type="evidence" value="ECO:0000314"/>
    <property type="project" value="ComplexPortal"/>
</dbReference>
<dbReference type="GO" id="GO:0009267">
    <property type="term" value="P:cellular response to starvation"/>
    <property type="evidence" value="ECO:0000314"/>
    <property type="project" value="ComplexPortal"/>
</dbReference>
<dbReference type="GO" id="GO:0006113">
    <property type="term" value="P:fermentation"/>
    <property type="evidence" value="ECO:0000314"/>
    <property type="project" value="ComplexPortal"/>
</dbReference>
<dbReference type="GO" id="GO:1902421">
    <property type="term" value="P:hydrogen metabolic process"/>
    <property type="evidence" value="ECO:0000305"/>
    <property type="project" value="EcoCyc"/>
</dbReference>
<dbReference type="FunFam" id="1.20.950.20:FF:000003">
    <property type="entry name" value="Ni/Fe-hydrogenase 1 b-type cytochrome subunit"/>
    <property type="match status" value="1"/>
</dbReference>
<dbReference type="Gene3D" id="1.20.950.20">
    <property type="entry name" value="Transmembrane di-heme cytochromes, Chain C"/>
    <property type="match status" value="1"/>
</dbReference>
<dbReference type="InterPro" id="IPR011577">
    <property type="entry name" value="Cyt_b561_bac/Ni-Hgenase"/>
</dbReference>
<dbReference type="InterPro" id="IPR016174">
    <property type="entry name" value="Di-haem_cyt_TM"/>
</dbReference>
<dbReference type="InterPro" id="IPR051542">
    <property type="entry name" value="Hydrogenase_cytochrome"/>
</dbReference>
<dbReference type="InterPro" id="IPR000516">
    <property type="entry name" value="Ni-dep_Hydgase_cyt-B"/>
</dbReference>
<dbReference type="NCBIfam" id="TIGR02125">
    <property type="entry name" value="CytB-hydogenase"/>
    <property type="match status" value="1"/>
</dbReference>
<dbReference type="NCBIfam" id="NF007551">
    <property type="entry name" value="PRK10171.1"/>
    <property type="match status" value="1"/>
</dbReference>
<dbReference type="PANTHER" id="PTHR30485">
    <property type="entry name" value="NI/FE-HYDROGENASE 1 B-TYPE CYTOCHROME SUBUNIT"/>
    <property type="match status" value="1"/>
</dbReference>
<dbReference type="PANTHER" id="PTHR30485:SF0">
    <property type="entry name" value="NI_FE-HYDROGENASE 1 B-TYPE CYTOCHROME SUBUNIT-RELATED"/>
    <property type="match status" value="1"/>
</dbReference>
<dbReference type="Pfam" id="PF01292">
    <property type="entry name" value="Ni_hydr_CYTB"/>
    <property type="match status" value="1"/>
</dbReference>
<dbReference type="PRINTS" id="PR00161">
    <property type="entry name" value="NIHGNASECYTB"/>
</dbReference>
<dbReference type="SUPFAM" id="SSF81342">
    <property type="entry name" value="Transmembrane di-heme cytochromes"/>
    <property type="match status" value="1"/>
</dbReference>
<dbReference type="PROSITE" id="PS00882">
    <property type="entry name" value="NI_HGENASE_CYTB_1"/>
    <property type="match status" value="1"/>
</dbReference>
<dbReference type="PROSITE" id="PS00883">
    <property type="entry name" value="NI_HGENASE_CYTB_2"/>
    <property type="match status" value="1"/>
</dbReference>
<organism>
    <name type="scientific">Escherichia coli (strain K12)</name>
    <dbReference type="NCBI Taxonomy" id="83333"/>
    <lineage>
        <taxon>Bacteria</taxon>
        <taxon>Pseudomonadati</taxon>
        <taxon>Pseudomonadota</taxon>
        <taxon>Gammaproteobacteria</taxon>
        <taxon>Enterobacterales</taxon>
        <taxon>Enterobacteriaceae</taxon>
        <taxon>Escherichia</taxon>
    </lineage>
</organism>
<gene>
    <name type="primary">hyaC</name>
    <name type="ordered locus">b0974</name>
    <name type="ordered locus">JW0956</name>
</gene>
<proteinExistence type="evidence at protein level"/>
<name>CYBH_ECOLI</name>
<comment type="function">
    <text>Probable b-type cytochrome.</text>
</comment>
<comment type="subcellular location">
    <subcellularLocation>
        <location>Cell inner membrane</location>
        <topology>Multi-pass membrane protein</topology>
    </subcellularLocation>
</comment>
<comment type="similarity">
    <text evidence="2">Belongs to the HupC/HyaC/HydC family.</text>
</comment>
<protein>
    <recommendedName>
        <fullName>Probable Ni/Fe-hydrogenase 1 B-type cytochrome subunit</fullName>
    </recommendedName>
</protein>
<sequence>MQQKSDNVVSHYVFEAPVRIWHWLTVLCMAVLMVTGYFIGKPLPSVSGEATYLFYMGYIRLIHFSAGMVFTVVLLMRIYWAFVGNRYSRELFIVPVWRKSWWQGVWYEIRWYLFLAKRPSADIGHNPIAQAAMFGYFLMSVFMIITGFALYSEHSQYAIFAPFRYVVEFFYWTGGNSMDIHSWHRLGMWLIGAFVIGHVYMALREDIMSDDTVISTMVNGYRSHKFGKISNKERS</sequence>
<keyword id="KW-0002">3D-structure</keyword>
<keyword id="KW-0997">Cell inner membrane</keyword>
<keyword id="KW-1003">Cell membrane</keyword>
<keyword id="KW-0249">Electron transport</keyword>
<keyword id="KW-0349">Heme</keyword>
<keyword id="KW-0408">Iron</keyword>
<keyword id="KW-0472">Membrane</keyword>
<keyword id="KW-0479">Metal-binding</keyword>
<keyword id="KW-1185">Reference proteome</keyword>
<keyword id="KW-0812">Transmembrane</keyword>
<keyword id="KW-1133">Transmembrane helix</keyword>
<keyword id="KW-0813">Transport</keyword>